<sequence length="177" mass="19815">MLEKLIERVLFATRWLLAPLCIAMSLVLVVLGYVFMKELWHMLSHLDTISETDLVLSALGLVDLLFMAGLVLMVLLASYESFVSKLDKVDASEITWLKHTDFNALKLKVSLSIVAISAIFLLKRYMSLEDVLSSIPKDTPLSHNPIFWQVVIHLVFVCSALLAAVTNNIAFSQNKGH</sequence>
<reference key="1">
    <citation type="journal article" date="2009" name="J. Bacteriol.">
        <title>The complete genome sequence of Helicobacter pylori strain G27.</title>
        <authorList>
            <person name="Baltrus D.A."/>
            <person name="Amieva M.R."/>
            <person name="Covacci A."/>
            <person name="Lowe T.M."/>
            <person name="Merrell D.S."/>
            <person name="Ottemann K.M."/>
            <person name="Stein M."/>
            <person name="Salama N.R."/>
            <person name="Guillemin K."/>
        </authorList>
    </citation>
    <scope>NUCLEOTIDE SEQUENCE [LARGE SCALE GENOMIC DNA]</scope>
    <source>
        <strain>G27</strain>
    </source>
</reference>
<accession>B5Z9W0</accession>
<proteinExistence type="inferred from homology"/>
<evidence type="ECO:0000255" key="1">
    <source>
        <dbReference type="HAMAP-Rule" id="MF_00143"/>
    </source>
</evidence>
<protein>
    <recommendedName>
        <fullName evidence="1">UPF0114 protein HPG27_173</fullName>
    </recommendedName>
</protein>
<organism>
    <name type="scientific">Helicobacter pylori (strain G27)</name>
    <dbReference type="NCBI Taxonomy" id="563041"/>
    <lineage>
        <taxon>Bacteria</taxon>
        <taxon>Pseudomonadati</taxon>
        <taxon>Campylobacterota</taxon>
        <taxon>Epsilonproteobacteria</taxon>
        <taxon>Campylobacterales</taxon>
        <taxon>Helicobacteraceae</taxon>
        <taxon>Helicobacter</taxon>
    </lineage>
</organism>
<comment type="subcellular location">
    <subcellularLocation>
        <location evidence="1">Cell membrane</location>
        <topology evidence="1">Multi-pass membrane protein</topology>
    </subcellularLocation>
</comment>
<comment type="similarity">
    <text evidence="1">Belongs to the UPF0114 family.</text>
</comment>
<dbReference type="EMBL" id="CP001173">
    <property type="protein sequence ID" value="ACI26940.1"/>
    <property type="molecule type" value="Genomic_DNA"/>
</dbReference>
<dbReference type="RefSeq" id="WP_000890445.1">
    <property type="nucleotide sequence ID" value="NC_011333.1"/>
</dbReference>
<dbReference type="KEGG" id="hpg:HPG27_173"/>
<dbReference type="HOGENOM" id="CLU_097887_1_0_7"/>
<dbReference type="Proteomes" id="UP000001735">
    <property type="component" value="Chromosome"/>
</dbReference>
<dbReference type="GO" id="GO:0005886">
    <property type="term" value="C:plasma membrane"/>
    <property type="evidence" value="ECO:0007669"/>
    <property type="project" value="UniProtKB-SubCell"/>
</dbReference>
<dbReference type="HAMAP" id="MF_00143">
    <property type="entry name" value="UPF0114"/>
    <property type="match status" value="1"/>
</dbReference>
<dbReference type="InterPro" id="IPR005134">
    <property type="entry name" value="UPF0114"/>
</dbReference>
<dbReference type="InterPro" id="IPR020761">
    <property type="entry name" value="UPF0114_bac"/>
</dbReference>
<dbReference type="NCBIfam" id="TIGR00645">
    <property type="entry name" value="HI0507"/>
    <property type="match status" value="1"/>
</dbReference>
<dbReference type="PANTHER" id="PTHR38596">
    <property type="entry name" value="UPF0114 PROTEIN YQHA"/>
    <property type="match status" value="1"/>
</dbReference>
<dbReference type="PANTHER" id="PTHR38596:SF1">
    <property type="entry name" value="UPF0114 PROTEIN YQHA"/>
    <property type="match status" value="1"/>
</dbReference>
<dbReference type="Pfam" id="PF03350">
    <property type="entry name" value="UPF0114"/>
    <property type="match status" value="1"/>
</dbReference>
<gene>
    <name type="ordered locus">HPG27_173</name>
</gene>
<keyword id="KW-1003">Cell membrane</keyword>
<keyword id="KW-0472">Membrane</keyword>
<keyword id="KW-1185">Reference proteome</keyword>
<keyword id="KW-0812">Transmembrane</keyword>
<keyword id="KW-1133">Transmembrane helix</keyword>
<name>Y173_HELPG</name>
<feature type="chain" id="PRO_1000096268" description="UPF0114 protein HPG27_173">
    <location>
        <begin position="1"/>
        <end position="177"/>
    </location>
</feature>
<feature type="transmembrane region" description="Helical" evidence="1">
    <location>
        <begin position="15"/>
        <end position="35"/>
    </location>
</feature>
<feature type="transmembrane region" description="Helical" evidence="1">
    <location>
        <begin position="54"/>
        <end position="74"/>
    </location>
</feature>
<feature type="transmembrane region" description="Helical" evidence="1">
    <location>
        <begin position="102"/>
        <end position="122"/>
    </location>
</feature>
<feature type="transmembrane region" description="Helical" evidence="1">
    <location>
        <begin position="145"/>
        <end position="165"/>
    </location>
</feature>